<comment type="function">
    <text evidence="1">May function as a transcriptional regulator that controls feoABC expression.</text>
</comment>
<comment type="similarity">
    <text evidence="1">Belongs to the FeoC family.</text>
</comment>
<reference key="1">
    <citation type="journal article" date="2009" name="J. Bacteriol.">
        <title>Complete genome sequence and comparative genome analysis of enteropathogenic Escherichia coli O127:H6 strain E2348/69.</title>
        <authorList>
            <person name="Iguchi A."/>
            <person name="Thomson N.R."/>
            <person name="Ogura Y."/>
            <person name="Saunders D."/>
            <person name="Ooka T."/>
            <person name="Henderson I.R."/>
            <person name="Harris D."/>
            <person name="Asadulghani M."/>
            <person name="Kurokawa K."/>
            <person name="Dean P."/>
            <person name="Kenny B."/>
            <person name="Quail M.A."/>
            <person name="Thurston S."/>
            <person name="Dougan G."/>
            <person name="Hayashi T."/>
            <person name="Parkhill J."/>
            <person name="Frankel G."/>
        </authorList>
    </citation>
    <scope>NUCLEOTIDE SEQUENCE [LARGE SCALE GENOMIC DNA]</scope>
    <source>
        <strain>E2348/69 / EPEC</strain>
    </source>
</reference>
<sequence>MASLIQVRDLLALRSRMEAAQISQTLNTPQPMINAMLQQLESMGKAVRIQEEPDGCLSGSCKSCPEGKACLREWWALR</sequence>
<organism>
    <name type="scientific">Escherichia coli O127:H6 (strain E2348/69 / EPEC)</name>
    <dbReference type="NCBI Taxonomy" id="574521"/>
    <lineage>
        <taxon>Bacteria</taxon>
        <taxon>Pseudomonadati</taxon>
        <taxon>Pseudomonadota</taxon>
        <taxon>Gammaproteobacteria</taxon>
        <taxon>Enterobacterales</taxon>
        <taxon>Enterobacteriaceae</taxon>
        <taxon>Escherichia</taxon>
    </lineage>
</organism>
<protein>
    <recommendedName>
        <fullName evidence="1">Probable [Fe-S]-dependent transcriptional repressor</fullName>
    </recommendedName>
</protein>
<accession>B7UKB5</accession>
<name>FEOC_ECO27</name>
<feature type="chain" id="PRO_1000185674" description="Probable [Fe-S]-dependent transcriptional repressor">
    <location>
        <begin position="1"/>
        <end position="78"/>
    </location>
</feature>
<feature type="binding site" evidence="1">
    <location>
        <position position="56"/>
    </location>
    <ligand>
        <name>iron-sulfur cluster</name>
        <dbReference type="ChEBI" id="CHEBI:30408"/>
    </ligand>
</feature>
<feature type="binding site" evidence="1">
    <location>
        <position position="61"/>
    </location>
    <ligand>
        <name>iron-sulfur cluster</name>
        <dbReference type="ChEBI" id="CHEBI:30408"/>
    </ligand>
</feature>
<feature type="binding site" evidence="1">
    <location>
        <position position="64"/>
    </location>
    <ligand>
        <name>iron-sulfur cluster</name>
        <dbReference type="ChEBI" id="CHEBI:30408"/>
    </ligand>
</feature>
<feature type="binding site" evidence="1">
    <location>
        <position position="70"/>
    </location>
    <ligand>
        <name>iron-sulfur cluster</name>
        <dbReference type="ChEBI" id="CHEBI:30408"/>
    </ligand>
</feature>
<proteinExistence type="inferred from homology"/>
<gene>
    <name evidence="1" type="primary">feoC</name>
    <name type="ordered locus">E2348C_3655</name>
</gene>
<dbReference type="EMBL" id="FM180568">
    <property type="protein sequence ID" value="CAS11203.1"/>
    <property type="molecule type" value="Genomic_DNA"/>
</dbReference>
<dbReference type="RefSeq" id="WP_012579009.1">
    <property type="nucleotide sequence ID" value="NC_011601.1"/>
</dbReference>
<dbReference type="SMR" id="B7UKB5"/>
<dbReference type="KEGG" id="ecg:E2348C_3655"/>
<dbReference type="HOGENOM" id="CLU_189182_0_0_6"/>
<dbReference type="Proteomes" id="UP000008205">
    <property type="component" value="Chromosome"/>
</dbReference>
<dbReference type="GO" id="GO:0003677">
    <property type="term" value="F:DNA binding"/>
    <property type="evidence" value="ECO:0007669"/>
    <property type="project" value="UniProtKB-KW"/>
</dbReference>
<dbReference type="GO" id="GO:0005506">
    <property type="term" value="F:iron ion binding"/>
    <property type="evidence" value="ECO:0007669"/>
    <property type="project" value="UniProtKB-UniRule"/>
</dbReference>
<dbReference type="GO" id="GO:0051536">
    <property type="term" value="F:iron-sulfur cluster binding"/>
    <property type="evidence" value="ECO:0007669"/>
    <property type="project" value="UniProtKB-KW"/>
</dbReference>
<dbReference type="Gene3D" id="1.10.10.10">
    <property type="entry name" value="Winged helix-like DNA-binding domain superfamily/Winged helix DNA-binding domain"/>
    <property type="match status" value="1"/>
</dbReference>
<dbReference type="HAMAP" id="MF_01586">
    <property type="entry name" value="FeoC"/>
    <property type="match status" value="1"/>
</dbReference>
<dbReference type="InterPro" id="IPR023732">
    <property type="entry name" value="FeoC"/>
</dbReference>
<dbReference type="InterPro" id="IPR015102">
    <property type="entry name" value="Tscrpt_reg_HTH_FeoC"/>
</dbReference>
<dbReference type="InterPro" id="IPR036388">
    <property type="entry name" value="WH-like_DNA-bd_sf"/>
</dbReference>
<dbReference type="InterPro" id="IPR036390">
    <property type="entry name" value="WH_DNA-bd_sf"/>
</dbReference>
<dbReference type="NCBIfam" id="NF011960">
    <property type="entry name" value="PRK15431.1"/>
    <property type="match status" value="1"/>
</dbReference>
<dbReference type="Pfam" id="PF09012">
    <property type="entry name" value="FeoC"/>
    <property type="match status" value="1"/>
</dbReference>
<dbReference type="SUPFAM" id="SSF46785">
    <property type="entry name" value="Winged helix' DNA-binding domain"/>
    <property type="match status" value="1"/>
</dbReference>
<evidence type="ECO:0000255" key="1">
    <source>
        <dbReference type="HAMAP-Rule" id="MF_01586"/>
    </source>
</evidence>
<keyword id="KW-0238">DNA-binding</keyword>
<keyword id="KW-0408">Iron</keyword>
<keyword id="KW-0411">Iron-sulfur</keyword>
<keyword id="KW-0479">Metal-binding</keyword>
<keyword id="KW-1185">Reference proteome</keyword>
<keyword id="KW-0678">Repressor</keyword>
<keyword id="KW-0804">Transcription</keyword>
<keyword id="KW-0805">Transcription regulation</keyword>